<evidence type="ECO:0000255" key="1">
    <source>
        <dbReference type="HAMAP-Rule" id="MF_03050"/>
    </source>
</evidence>
<evidence type="ECO:0000269" key="2">
    <source>
    </source>
</evidence>
<evidence type="ECO:0000269" key="3">
    <source>
    </source>
</evidence>
<evidence type="ECO:0000269" key="4">
    <source>
    </source>
</evidence>
<evidence type="ECO:0000269" key="5">
    <source>
    </source>
</evidence>
<evidence type="ECO:0000269" key="6">
    <source>
    </source>
</evidence>
<evidence type="ECO:0000305" key="7"/>
<proteinExistence type="evidence at protein level"/>
<accession>Q9C5X8</accession>
<accession>Q9FX72</accession>
<gene>
    <name type="primary">ABA3</name>
    <name type="synonym">LOS5</name>
    <name type="ordered locus">At1g16540</name>
    <name type="ORF">F19K19.13</name>
</gene>
<name>MOCOS_ARATH</name>
<comment type="function">
    <text evidence="1 2 3 4 5 6">Sulfurates the molybdenum cofactor. Sulfation of molybdenum is essential for xanthine dehydrogenase (XDH) and aldehyde oxidase (ADO) enzymes in which molybdenum cofactor is liganded by 1 oxygen and 1 sulfur atom in active form. Modulates cold stress- and osmotic stress-responsive gene expression by acting as key regulator of abscisic acid (ABA) biosynthesis.</text>
</comment>
<comment type="catalytic activity">
    <reaction evidence="1 3 5">
        <text>Mo-molybdopterin + L-cysteine + AH2 = thio-Mo-molybdopterin + L-alanine + A + H2O</text>
        <dbReference type="Rhea" id="RHEA:42636"/>
        <dbReference type="ChEBI" id="CHEBI:13193"/>
        <dbReference type="ChEBI" id="CHEBI:15377"/>
        <dbReference type="ChEBI" id="CHEBI:17499"/>
        <dbReference type="ChEBI" id="CHEBI:35235"/>
        <dbReference type="ChEBI" id="CHEBI:57972"/>
        <dbReference type="ChEBI" id="CHEBI:71302"/>
        <dbReference type="ChEBI" id="CHEBI:82685"/>
        <dbReference type="EC" id="2.8.1.9"/>
    </reaction>
</comment>
<comment type="cofactor">
    <cofactor evidence="1 5">
        <name>pyridoxal 5'-phosphate</name>
        <dbReference type="ChEBI" id="CHEBI:597326"/>
    </cofactor>
</comment>
<comment type="biophysicochemical properties">
    <kinetics>
        <KM evidence="5">50 uM for L-cysteine</KM>
        <KM evidence="5">200 uM for L-selenocysteine</KM>
    </kinetics>
</comment>
<comment type="pathway">
    <text evidence="3">Cofactor biosynthesis; molybdopterin biosynthesis.</text>
</comment>
<comment type="tissue specificity">
    <text evidence="2">Ubiquitously expressed.</text>
</comment>
<comment type="induction">
    <text evidence="2">Up-regulated in response to drought, salt or ABA treatment.</text>
</comment>
<comment type="similarity">
    <text evidence="1">Belongs to the class-V pyridoxal-phosphate-dependent aminotransferase family. MOCOS subfamily.</text>
</comment>
<comment type="sequence caution" evidence="7">
    <conflict type="erroneous gene model prediction">
        <sequence resource="EMBL-CDS" id="AAG10824"/>
    </conflict>
</comment>
<sequence length="819" mass="91803">MEAFLKEFGDYYGYPDGPKNIQEIRDTEFKRLDKGVVYLDHAGSTLYSELQMEYIFKDFTSNVFGNPHSQSDISSATSDLIADARHQVLEYFNASPEDYSCLFTSGATAALKLVGETFPWTQDSNFLYTMENHNSVLGIREYALAQGASACAVDIEEAANQPGQLTNSGPSIKVKHRAVQMRNTSKLQKEESRGNAYNLFAFPSECNFSGLRFNLDLVKLMKENTETVLQGSPFSKSKRWMVLIDAAKGCATLPPDLSEYPADFVVLSFYKLFGYPTGLGALLVRNDAAKLLKKTYFSGGTVAASIADIDFVKRRERVEEFFEDGSASFLSIAAIRHGFKLLKSLTPSAIWMHTTSLSIYVKKKLQALRHGNGAAVCVLYGSENLELSSHKSGPTVTFNLKRPDGSWFGYLEVEKLASLSGIQLRTGCFCNPGACAKYLELSHSELRSNVEAGHICWDDNDVINGKPTGAVRVSFGYMSTFEDAKKFIDFIISSFASPPKKTGNGTVVSGRFPQLPSEDLESKESFPSHYLKSITVYPIKSCAGFSVIRWPLCRTGLLHDREWMVQGLTGEILTQKKVPEMSLIKTFIDLEEGLLSVESSRCEDKLHIRIKSDSYNPRNDEFDSHANILENRNEETRINRWFTNAIGRQCKLLRYSSSTSKDCLNRNKSPGLCRDLESNINFANEAQFLLISEESVADLNRRLEAKDEDYKRAHEKLNPHRFRPNLVISGGEPYGEDKWKTVKIGDNHFTSLGGCNRCQMINISNEAGLVKKSNEPLTTLASYRRVKGKILFGTLLRYEIDEKRQCWIGVGEEVNPDIE</sequence>
<dbReference type="EC" id="2.8.1.9" evidence="1 3 5"/>
<dbReference type="EMBL" id="AF325457">
    <property type="protein sequence ID" value="AAK12939.1"/>
    <property type="molecule type" value="mRNA"/>
</dbReference>
<dbReference type="EMBL" id="AY034895">
    <property type="protein sequence ID" value="AAK58888.1"/>
    <property type="molecule type" value="mRNA"/>
</dbReference>
<dbReference type="EMBL" id="AC011808">
    <property type="protein sequence ID" value="AAG10824.1"/>
    <property type="status" value="ALT_SEQ"/>
    <property type="molecule type" value="Genomic_DNA"/>
</dbReference>
<dbReference type="EMBL" id="CP002684">
    <property type="protein sequence ID" value="AEE29467.1"/>
    <property type="molecule type" value="Genomic_DNA"/>
</dbReference>
<dbReference type="PIR" id="G86300">
    <property type="entry name" value="G86300"/>
</dbReference>
<dbReference type="RefSeq" id="NP_564001.1">
    <property type="nucleotide sequence ID" value="NM_101519.3"/>
</dbReference>
<dbReference type="SMR" id="Q9C5X8"/>
<dbReference type="FunCoup" id="Q9C5X8">
    <property type="interactions" value="1714"/>
</dbReference>
<dbReference type="STRING" id="3702.Q9C5X8"/>
<dbReference type="GlyGen" id="Q9C5X8">
    <property type="glycosylation" value="1 site"/>
</dbReference>
<dbReference type="iPTMnet" id="Q9C5X8"/>
<dbReference type="PaxDb" id="3702-AT1G16540.1"/>
<dbReference type="ProteomicsDB" id="238297"/>
<dbReference type="EnsemblPlants" id="AT1G16540.1">
    <property type="protein sequence ID" value="AT1G16540.1"/>
    <property type="gene ID" value="AT1G16540"/>
</dbReference>
<dbReference type="GeneID" id="838224"/>
<dbReference type="Gramene" id="AT1G16540.1">
    <property type="protein sequence ID" value="AT1G16540.1"/>
    <property type="gene ID" value="AT1G16540"/>
</dbReference>
<dbReference type="KEGG" id="ath:AT1G16540"/>
<dbReference type="Araport" id="AT1G16540"/>
<dbReference type="TAIR" id="AT1G16540">
    <property type="gene designation" value="ABA3"/>
</dbReference>
<dbReference type="eggNOG" id="KOG2142">
    <property type="taxonomic scope" value="Eukaryota"/>
</dbReference>
<dbReference type="HOGENOM" id="CLU_010913_0_1_1"/>
<dbReference type="InParanoid" id="Q9C5X8"/>
<dbReference type="PhylomeDB" id="Q9C5X8"/>
<dbReference type="BRENDA" id="2.8.1.9">
    <property type="organism ID" value="399"/>
</dbReference>
<dbReference type="SABIO-RK" id="Q9C5X8"/>
<dbReference type="UniPathway" id="UPA00344"/>
<dbReference type="PRO" id="PR:Q9C5X8"/>
<dbReference type="Proteomes" id="UP000006548">
    <property type="component" value="Chromosome 1"/>
</dbReference>
<dbReference type="ExpressionAtlas" id="Q9C5X8">
    <property type="expression patterns" value="baseline and differential"/>
</dbReference>
<dbReference type="GO" id="GO:0008265">
    <property type="term" value="F:molybdenum cofactor sulfurtransferase activity"/>
    <property type="evidence" value="ECO:0000314"/>
    <property type="project" value="TAIR"/>
</dbReference>
<dbReference type="GO" id="GO:0030151">
    <property type="term" value="F:molybdenum ion binding"/>
    <property type="evidence" value="ECO:0007669"/>
    <property type="project" value="UniProtKB-UniRule"/>
</dbReference>
<dbReference type="GO" id="GO:0030170">
    <property type="term" value="F:pyridoxal phosphate binding"/>
    <property type="evidence" value="ECO:0007669"/>
    <property type="project" value="UniProtKB-UniRule"/>
</dbReference>
<dbReference type="GO" id="GO:0009000">
    <property type="term" value="F:selenocysteine lyase activity"/>
    <property type="evidence" value="ECO:0000314"/>
    <property type="project" value="TAIR"/>
</dbReference>
<dbReference type="GO" id="GO:0009688">
    <property type="term" value="P:abscisic acid biosynthetic process"/>
    <property type="evidence" value="ECO:0000315"/>
    <property type="project" value="TAIR"/>
</dbReference>
<dbReference type="GO" id="GO:0009734">
    <property type="term" value="P:auxin-activated signaling pathway"/>
    <property type="evidence" value="ECO:0000315"/>
    <property type="project" value="TAIR"/>
</dbReference>
<dbReference type="GO" id="GO:0042742">
    <property type="term" value="P:defense response to bacterium"/>
    <property type="evidence" value="ECO:0000315"/>
    <property type="project" value="TAIR"/>
</dbReference>
<dbReference type="GO" id="GO:0006777">
    <property type="term" value="P:Mo-molybdopterin cofactor biosynthetic process"/>
    <property type="evidence" value="ECO:0007669"/>
    <property type="project" value="UniProtKB-UniRule"/>
</dbReference>
<dbReference type="GO" id="GO:0018315">
    <property type="term" value="P:molybdenum incorporation into molybdenum-molybdopterin complex"/>
    <property type="evidence" value="ECO:0000314"/>
    <property type="project" value="TAIR"/>
</dbReference>
<dbReference type="GO" id="GO:0045037">
    <property type="term" value="P:protein import into chloroplast stroma"/>
    <property type="evidence" value="ECO:0000315"/>
    <property type="project" value="TAIR"/>
</dbReference>
<dbReference type="GO" id="GO:0009409">
    <property type="term" value="P:response to cold"/>
    <property type="evidence" value="ECO:0000315"/>
    <property type="project" value="TAIR"/>
</dbReference>
<dbReference type="GO" id="GO:0009749">
    <property type="term" value="P:response to glucose"/>
    <property type="evidence" value="ECO:0000315"/>
    <property type="project" value="TAIR"/>
</dbReference>
<dbReference type="GO" id="GO:0009408">
    <property type="term" value="P:response to heat"/>
    <property type="evidence" value="ECO:0000315"/>
    <property type="project" value="TAIR"/>
</dbReference>
<dbReference type="GO" id="GO:0006970">
    <property type="term" value="P:response to osmotic stress"/>
    <property type="evidence" value="ECO:0000315"/>
    <property type="project" value="TAIR"/>
</dbReference>
<dbReference type="GO" id="GO:0009651">
    <property type="term" value="P:response to salt stress"/>
    <property type="evidence" value="ECO:0000315"/>
    <property type="project" value="TAIR"/>
</dbReference>
<dbReference type="GO" id="GO:0010118">
    <property type="term" value="P:stomatal movement"/>
    <property type="evidence" value="ECO:0000315"/>
    <property type="project" value="TAIR"/>
</dbReference>
<dbReference type="GO" id="GO:0010182">
    <property type="term" value="P:sugar mediated signaling pathway"/>
    <property type="evidence" value="ECO:0000304"/>
    <property type="project" value="TAIR"/>
</dbReference>
<dbReference type="FunFam" id="3.40.640.10:FF:000240">
    <property type="entry name" value="Molybdenum cofactor sulfurase"/>
    <property type="match status" value="1"/>
</dbReference>
<dbReference type="FunFam" id="3.90.1150.10:FF:000079">
    <property type="entry name" value="Molybdenum cofactor sulfurase"/>
    <property type="match status" value="1"/>
</dbReference>
<dbReference type="Gene3D" id="3.90.1150.10">
    <property type="entry name" value="Aspartate Aminotransferase, domain 1"/>
    <property type="match status" value="1"/>
</dbReference>
<dbReference type="Gene3D" id="3.40.640.10">
    <property type="entry name" value="Type I PLP-dependent aspartate aminotransferase-like (Major domain)"/>
    <property type="match status" value="1"/>
</dbReference>
<dbReference type="HAMAP" id="MF_03050">
    <property type="entry name" value="MOCOS"/>
    <property type="match status" value="1"/>
</dbReference>
<dbReference type="InterPro" id="IPR000192">
    <property type="entry name" value="Aminotrans_V_dom"/>
</dbReference>
<dbReference type="InterPro" id="IPR005302">
    <property type="entry name" value="MoCF_Sase_C"/>
</dbReference>
<dbReference type="InterPro" id="IPR028886">
    <property type="entry name" value="MoCo_sulfurase"/>
</dbReference>
<dbReference type="InterPro" id="IPR005303">
    <property type="entry name" value="MOCOS_middle"/>
</dbReference>
<dbReference type="InterPro" id="IPR015424">
    <property type="entry name" value="PyrdxlP-dep_Trfase"/>
</dbReference>
<dbReference type="InterPro" id="IPR015421">
    <property type="entry name" value="PyrdxlP-dep_Trfase_major"/>
</dbReference>
<dbReference type="InterPro" id="IPR015422">
    <property type="entry name" value="PyrdxlP-dep_Trfase_small"/>
</dbReference>
<dbReference type="InterPro" id="IPR011037">
    <property type="entry name" value="Pyrv_Knase-like_insert_dom_sf"/>
</dbReference>
<dbReference type="PANTHER" id="PTHR14237:SF19">
    <property type="entry name" value="MITOCHONDRIAL AMIDOXIME REDUCING COMPONENT 1"/>
    <property type="match status" value="1"/>
</dbReference>
<dbReference type="PANTHER" id="PTHR14237">
    <property type="entry name" value="MOLYBDOPTERIN COFACTOR SULFURASE MOSC"/>
    <property type="match status" value="1"/>
</dbReference>
<dbReference type="Pfam" id="PF00266">
    <property type="entry name" value="Aminotran_5"/>
    <property type="match status" value="2"/>
</dbReference>
<dbReference type="Pfam" id="PF03473">
    <property type="entry name" value="MOSC"/>
    <property type="match status" value="1"/>
</dbReference>
<dbReference type="Pfam" id="PF03476">
    <property type="entry name" value="MOSC_N"/>
    <property type="match status" value="1"/>
</dbReference>
<dbReference type="SUPFAM" id="SSF141673">
    <property type="entry name" value="MOSC N-terminal domain-like"/>
    <property type="match status" value="1"/>
</dbReference>
<dbReference type="SUPFAM" id="SSF50800">
    <property type="entry name" value="PK beta-barrel domain-like"/>
    <property type="match status" value="1"/>
</dbReference>
<dbReference type="SUPFAM" id="SSF53383">
    <property type="entry name" value="PLP-dependent transferases"/>
    <property type="match status" value="1"/>
</dbReference>
<dbReference type="PROSITE" id="PS51340">
    <property type="entry name" value="MOSC"/>
    <property type="match status" value="1"/>
</dbReference>
<organism>
    <name type="scientific">Arabidopsis thaliana</name>
    <name type="common">Mouse-ear cress</name>
    <dbReference type="NCBI Taxonomy" id="3702"/>
    <lineage>
        <taxon>Eukaryota</taxon>
        <taxon>Viridiplantae</taxon>
        <taxon>Streptophyta</taxon>
        <taxon>Embryophyta</taxon>
        <taxon>Tracheophyta</taxon>
        <taxon>Spermatophyta</taxon>
        <taxon>Magnoliopsida</taxon>
        <taxon>eudicotyledons</taxon>
        <taxon>Gunneridae</taxon>
        <taxon>Pentapetalae</taxon>
        <taxon>rosids</taxon>
        <taxon>malvids</taxon>
        <taxon>Brassicales</taxon>
        <taxon>Brassicaceae</taxon>
        <taxon>Camelineae</taxon>
        <taxon>Arabidopsis</taxon>
    </lineage>
</organism>
<keyword id="KW-0501">Molybdenum cofactor biosynthesis</keyword>
<keyword id="KW-0663">Pyridoxal phosphate</keyword>
<keyword id="KW-1185">Reference proteome</keyword>
<keyword id="KW-0808">Transferase</keyword>
<feature type="chain" id="PRO_0000249958" description="Molybdenum cofactor sulfurase">
    <location>
        <begin position="1"/>
        <end position="819"/>
    </location>
</feature>
<feature type="domain" description="MOSC" evidence="1">
    <location>
        <begin position="650"/>
        <end position="817"/>
    </location>
</feature>
<feature type="active site">
    <location>
        <position position="430"/>
    </location>
</feature>
<feature type="modified residue" description="N6-(pyridoxal phosphate)lysine">
    <location>
        <position position="271"/>
    </location>
</feature>
<feature type="mutagenesis site" description="In los5-1; induces a deficiency in stress-induced ABA accumulation." evidence="2">
    <original>G</original>
    <variation>E</variation>
    <location>
        <position position="106"/>
    </location>
</feature>
<feature type="mutagenesis site" description="Loss of function." evidence="5">
    <original>K</original>
    <variation>S</variation>
    <location>
        <position position="271"/>
    </location>
</feature>
<feature type="mutagenesis site" description="Induces a strong reduction in enzyme activity." evidence="5">
    <original>C</original>
    <variation>A</variation>
    <location>
        <position position="430"/>
    </location>
</feature>
<feature type="mutagenesis site" description="In aba3-1; induces a reduced ABA biosynthesis." evidence="2 3">
    <original>G</original>
    <variation>E</variation>
    <location>
        <position position="469"/>
    </location>
</feature>
<reference key="1">
    <citation type="journal article" date="2001" name="J. Biol. Chem.">
        <title>ABA3 is a molybdenum cofactor sulfurase required for activation of aldehyde oxidase and xanthine dehydrogenase in Arabidopsis thaliana.</title>
        <authorList>
            <person name="Bittner F."/>
            <person name="Oreb M."/>
            <person name="Mendel R.R."/>
        </authorList>
    </citation>
    <scope>NUCLEOTIDE SEQUENCE [MRNA]</scope>
    <scope>FUNCTION</scope>
    <scope>CATALYTIC ACTIVITY</scope>
    <scope>PATHWAY</scope>
    <scope>MUTAGENESIS OF GLY-469</scope>
</reference>
<reference key="2">
    <citation type="journal article" date="2001" name="Plant Cell">
        <title>The arabidopsis los5/aba3 locus encodes a molybdenum cofactor sulfurase and modulates cold stress- and osmotic stress-responsive gene expression.</title>
        <authorList>
            <person name="Xiong L."/>
            <person name="Ishitani M."/>
            <person name="Lee H."/>
            <person name="Zhu J.-K."/>
        </authorList>
    </citation>
    <scope>NUCLEOTIDE SEQUENCE [MRNA]</scope>
    <scope>FUNCTION</scope>
    <scope>TISSUE SPECIFICITY</scope>
    <scope>INDUCTION</scope>
    <scope>MUTAGENESIS OF GLY-106 AND GLY-469</scope>
</reference>
<reference key="3">
    <citation type="journal article" date="2000" name="Nature">
        <title>Sequence and analysis of chromosome 1 of the plant Arabidopsis thaliana.</title>
        <authorList>
            <person name="Theologis A."/>
            <person name="Ecker J.R."/>
            <person name="Palm C.J."/>
            <person name="Federspiel N.A."/>
            <person name="Kaul S."/>
            <person name="White O."/>
            <person name="Alonso J."/>
            <person name="Altafi H."/>
            <person name="Araujo R."/>
            <person name="Bowman C.L."/>
            <person name="Brooks S.Y."/>
            <person name="Buehler E."/>
            <person name="Chan A."/>
            <person name="Chao Q."/>
            <person name="Chen H."/>
            <person name="Cheuk R.F."/>
            <person name="Chin C.W."/>
            <person name="Chung M.K."/>
            <person name="Conn L."/>
            <person name="Conway A.B."/>
            <person name="Conway A.R."/>
            <person name="Creasy T.H."/>
            <person name="Dewar K."/>
            <person name="Dunn P."/>
            <person name="Etgu P."/>
            <person name="Feldblyum T.V."/>
            <person name="Feng J.-D."/>
            <person name="Fong B."/>
            <person name="Fujii C.Y."/>
            <person name="Gill J.E."/>
            <person name="Goldsmith A.D."/>
            <person name="Haas B."/>
            <person name="Hansen N.F."/>
            <person name="Hughes B."/>
            <person name="Huizar L."/>
            <person name="Hunter J.L."/>
            <person name="Jenkins J."/>
            <person name="Johnson-Hopson C."/>
            <person name="Khan S."/>
            <person name="Khaykin E."/>
            <person name="Kim C.J."/>
            <person name="Koo H.L."/>
            <person name="Kremenetskaia I."/>
            <person name="Kurtz D.B."/>
            <person name="Kwan A."/>
            <person name="Lam B."/>
            <person name="Langin-Hooper S."/>
            <person name="Lee A."/>
            <person name="Lee J.M."/>
            <person name="Lenz C.A."/>
            <person name="Li J.H."/>
            <person name="Li Y.-P."/>
            <person name="Lin X."/>
            <person name="Liu S.X."/>
            <person name="Liu Z.A."/>
            <person name="Luros J.S."/>
            <person name="Maiti R."/>
            <person name="Marziali A."/>
            <person name="Militscher J."/>
            <person name="Miranda M."/>
            <person name="Nguyen M."/>
            <person name="Nierman W.C."/>
            <person name="Osborne B.I."/>
            <person name="Pai G."/>
            <person name="Peterson J."/>
            <person name="Pham P.K."/>
            <person name="Rizzo M."/>
            <person name="Rooney T."/>
            <person name="Rowley D."/>
            <person name="Sakano H."/>
            <person name="Salzberg S.L."/>
            <person name="Schwartz J.R."/>
            <person name="Shinn P."/>
            <person name="Southwick A.M."/>
            <person name="Sun H."/>
            <person name="Tallon L.J."/>
            <person name="Tambunga G."/>
            <person name="Toriumi M.J."/>
            <person name="Town C.D."/>
            <person name="Utterback T."/>
            <person name="Van Aken S."/>
            <person name="Vaysberg M."/>
            <person name="Vysotskaia V.S."/>
            <person name="Walker M."/>
            <person name="Wu D."/>
            <person name="Yu G."/>
            <person name="Fraser C.M."/>
            <person name="Venter J.C."/>
            <person name="Davis R.W."/>
        </authorList>
    </citation>
    <scope>NUCLEOTIDE SEQUENCE [LARGE SCALE GENOMIC DNA]</scope>
    <source>
        <strain>cv. Columbia</strain>
    </source>
</reference>
<reference key="4">
    <citation type="journal article" date="2017" name="Plant J.">
        <title>Araport11: a complete reannotation of the Arabidopsis thaliana reference genome.</title>
        <authorList>
            <person name="Cheng C.Y."/>
            <person name="Krishnakumar V."/>
            <person name="Chan A.P."/>
            <person name="Thibaud-Nissen F."/>
            <person name="Schobel S."/>
            <person name="Town C.D."/>
        </authorList>
    </citation>
    <scope>GENOME REANNOTATION</scope>
    <source>
        <strain>cv. Columbia</strain>
    </source>
</reference>
<reference key="5">
    <citation type="journal article" date="2004" name="J. Biol. Chem.">
        <title>Tandem orientation of duplicated xanthine dehydrogenase genes from Arabidopsis thaliana: differential gene expression and enzyme activities.</title>
        <authorList>
            <person name="Hesberg C."/>
            <person name="Haensch R."/>
            <person name="Mendel R.R."/>
            <person name="Bittner F."/>
        </authorList>
    </citation>
    <scope>FUNCTION</scope>
</reference>
<reference key="6">
    <citation type="journal article" date="2005" name="J. Biol. Chem.">
        <title>Characterization of the NifS-like domain of ABA3 from Arabidopsis thaliana provides insight into the mechanism of molybdenum cofactor sulfuration.</title>
        <authorList>
            <person name="Heidenreich T."/>
            <person name="Wollers S."/>
            <person name="Mendel R.R."/>
            <person name="Bittner F."/>
        </authorList>
    </citation>
    <scope>COFACTOR</scope>
    <scope>FUNCTION</scope>
    <scope>CATALYTIC ACTIVITY</scope>
    <scope>BIOPHYSICOCHEMICAL PROPERTIES</scope>
    <scope>PYRIDOXAL PHOSPHATE AT LYS-271</scope>
    <scope>MUTAGENESIS OF LYS-271 AND CYS-430</scope>
</reference>
<reference key="7">
    <citation type="journal article" date="2008" name="J. Biol. Chem.">
        <title>Binding of sulfurated molybdenum cofactor to the C-terminal domain of ABA3 from Arabidopsis thaliana provides insight into the mechanism of molybdenum cofactor sulfuration.</title>
        <authorList>
            <person name="Wollers S."/>
            <person name="Heidenreich T."/>
            <person name="Zarepour M."/>
            <person name="Zachmann D."/>
            <person name="Kraft C."/>
            <person name="Zhao Y."/>
            <person name="Mendel R.R."/>
            <person name="Bittner F."/>
        </authorList>
    </citation>
    <scope>FUNCTION OF C-TERMINAL DOMAIN</scope>
</reference>
<protein>
    <recommendedName>
        <fullName evidence="1">Molybdenum cofactor sulfurase</fullName>
        <shortName evidence="1">MCS</shortName>
        <shortName evidence="1">MOS</shortName>
        <shortName evidence="1">MoCo sulfurase</shortName>
        <ecNumber evidence="1 3 5">2.8.1.9</ecNumber>
    </recommendedName>
    <alternativeName>
        <fullName>Abscisic acid protein 3</fullName>
    </alternativeName>
    <alternativeName>
        <fullName>Low expression of osmotically expressive genes protein 5</fullName>
    </alternativeName>
    <alternativeName>
        <fullName evidence="1">Molybdenum cofactor sulfurtransferase</fullName>
    </alternativeName>
</protein>